<name>LNX2_HUMAN</name>
<sequence length="690" mass="76004">MGTTSDEMVSVEQTSSSSLNPLCFECGQQHWTRENHLYNYQNEVDDDLVCHICLQPLLQPLDTPCGHTFCYKCLRNFLQEKDFCPLDRKRLHFKLCKKSSILVHKLLDKLLVLCPFSSVCKDVMQRCDLEAHLKNRCPGASHRRVALERRKTSRTQAEIENENGPTLLDPAGTLSPEADCLGTGAVPVERHLTSASLSTWSEEPGLDNPAFEESAGADTTQQPLSLPEGEITTIEIHRSNPYIQLGISIVGGNETPLINIVIQEVYRDGVIARDGRLLAGDQILQVNNYNISNVSHNYARAVLSQPCNTLHLTVLRERRFGNRAHNHSDSNSPREEIFQVALHKRDSGEQLGIKLVRRTDEPGVFILDLLEGGLAAQDGRLSSNDRVLAINGHDLKYGTPELAAQIIQASGERVNLTIARPGKPQPGNTIREAGNHSSSSQHHTPPPYYSRPSSHKDLTQCVTCQEKHITVKKEPHESLGMTVAGGRGSKSGELPIFVTSVPPHGCLARDGRIKRGDVLLNINGIDLTNLSHSEAVAMLKASAASPAVALKALEVQIVEEATQNAEEQPSTFSENEYDASWSPSWVMWLGLPSTLHSCHDIVLRRSYLGSWGFSIVGGYEENHTNQPFFIKTIVLGTPAYYDGRLKCGDMIVAVNGLSTVGMSHSALVPMLKEQRNKVTLTVICWPGSLV</sequence>
<feature type="chain" id="PRO_0000055915" description="Ligand of Numb protein X 2">
    <location>
        <begin position="1"/>
        <end position="690"/>
    </location>
</feature>
<feature type="domain" description="PDZ 1" evidence="2">
    <location>
        <begin position="233"/>
        <end position="318"/>
    </location>
</feature>
<feature type="domain" description="PDZ 2" evidence="2">
    <location>
        <begin position="339"/>
        <end position="422"/>
    </location>
</feature>
<feature type="domain" description="PDZ 3" evidence="2">
    <location>
        <begin position="468"/>
        <end position="554"/>
    </location>
</feature>
<feature type="domain" description="PDZ 4" evidence="2">
    <location>
        <begin position="600"/>
        <end position="688"/>
    </location>
</feature>
<feature type="zinc finger region" description="RING-type" evidence="3">
    <location>
        <begin position="50"/>
        <end position="88"/>
    </location>
</feature>
<feature type="region of interest" description="Disordered" evidence="4">
    <location>
        <begin position="198"/>
        <end position="224"/>
    </location>
</feature>
<feature type="region of interest" description="Disordered" evidence="4">
    <location>
        <begin position="418"/>
        <end position="455"/>
    </location>
</feature>
<feature type="short sequence motif" description="NPXY motif">
    <location>
        <begin position="208"/>
        <end position="211"/>
    </location>
</feature>
<feature type="sequence variant" id="VAR_024612" description="In dbSNP:rs8002697.">
    <original>S</original>
    <variation>P</variation>
    <location>
        <position position="198"/>
    </location>
</feature>
<feature type="turn" evidence="6">
    <location>
        <begin position="24"/>
        <end position="26"/>
    </location>
</feature>
<feature type="strand" evidence="6">
    <location>
        <begin position="39"/>
        <end position="42"/>
    </location>
</feature>
<feature type="helix" evidence="6">
    <location>
        <begin position="46"/>
        <end position="48"/>
    </location>
</feature>
<feature type="turn" evidence="6">
    <location>
        <begin position="51"/>
        <end position="53"/>
    </location>
</feature>
<feature type="strand" evidence="6">
    <location>
        <begin position="58"/>
        <end position="62"/>
    </location>
</feature>
<feature type="strand" evidence="6">
    <location>
        <begin position="68"/>
        <end position="70"/>
    </location>
</feature>
<feature type="helix" evidence="6">
    <location>
        <begin position="71"/>
        <end position="77"/>
    </location>
</feature>
<feature type="turn" evidence="6">
    <location>
        <begin position="78"/>
        <end position="80"/>
    </location>
</feature>
<feature type="turn" evidence="6">
    <location>
        <begin position="85"/>
        <end position="87"/>
    </location>
</feature>
<feature type="helix" evidence="6">
    <location>
        <begin position="93"/>
        <end position="95"/>
    </location>
</feature>
<feature type="helix" evidence="6">
    <location>
        <begin position="101"/>
        <end position="108"/>
    </location>
</feature>
<feature type="strand" evidence="6">
    <location>
        <begin position="111"/>
        <end position="113"/>
    </location>
</feature>
<feature type="turn" evidence="6">
    <location>
        <begin position="117"/>
        <end position="119"/>
    </location>
</feature>
<feature type="strand" evidence="6">
    <location>
        <begin position="123"/>
        <end position="125"/>
    </location>
</feature>
<feature type="helix" evidence="6">
    <location>
        <begin position="126"/>
        <end position="128"/>
    </location>
</feature>
<feature type="helix" evidence="6">
    <location>
        <begin position="129"/>
        <end position="135"/>
    </location>
</feature>
<feature type="strand" evidence="7">
    <location>
        <begin position="336"/>
        <end position="343"/>
    </location>
</feature>
<feature type="strand" evidence="7">
    <location>
        <begin position="353"/>
        <end position="356"/>
    </location>
</feature>
<feature type="strand" evidence="7">
    <location>
        <begin position="359"/>
        <end position="361"/>
    </location>
</feature>
<feature type="strand" evidence="7">
    <location>
        <begin position="363"/>
        <end position="369"/>
    </location>
</feature>
<feature type="helix" evidence="7">
    <location>
        <begin position="374"/>
        <end position="378"/>
    </location>
</feature>
<feature type="strand" evidence="7">
    <location>
        <begin position="386"/>
        <end position="390"/>
    </location>
</feature>
<feature type="helix" evidence="7">
    <location>
        <begin position="400"/>
        <end position="408"/>
    </location>
</feature>
<feature type="strand" evidence="7">
    <location>
        <begin position="412"/>
        <end position="422"/>
    </location>
</feature>
<reference key="1">
    <citation type="journal article" date="2004" name="Nature">
        <title>The DNA sequence and analysis of human chromosome 13.</title>
        <authorList>
            <person name="Dunham A."/>
            <person name="Matthews L.H."/>
            <person name="Burton J."/>
            <person name="Ashurst J.L."/>
            <person name="Howe K.L."/>
            <person name="Ashcroft K.J."/>
            <person name="Beare D.M."/>
            <person name="Burford D.C."/>
            <person name="Hunt S.E."/>
            <person name="Griffiths-Jones S."/>
            <person name="Jones M.C."/>
            <person name="Keenan S.J."/>
            <person name="Oliver K."/>
            <person name="Scott C.E."/>
            <person name="Ainscough R."/>
            <person name="Almeida J.P."/>
            <person name="Ambrose K.D."/>
            <person name="Andrews D.T."/>
            <person name="Ashwell R.I.S."/>
            <person name="Babbage A.K."/>
            <person name="Bagguley C.L."/>
            <person name="Bailey J."/>
            <person name="Bannerjee R."/>
            <person name="Barlow K.F."/>
            <person name="Bates K."/>
            <person name="Beasley H."/>
            <person name="Bird C.P."/>
            <person name="Bray-Allen S."/>
            <person name="Brown A.J."/>
            <person name="Brown J.Y."/>
            <person name="Burrill W."/>
            <person name="Carder C."/>
            <person name="Carter N.P."/>
            <person name="Chapman J.C."/>
            <person name="Clamp M.E."/>
            <person name="Clark S.Y."/>
            <person name="Clarke G."/>
            <person name="Clee C.M."/>
            <person name="Clegg S.C."/>
            <person name="Cobley V."/>
            <person name="Collins J.E."/>
            <person name="Corby N."/>
            <person name="Coville G.J."/>
            <person name="Deloukas P."/>
            <person name="Dhami P."/>
            <person name="Dunham I."/>
            <person name="Dunn M."/>
            <person name="Earthrowl M.E."/>
            <person name="Ellington A.G."/>
            <person name="Faulkner L."/>
            <person name="Frankish A.G."/>
            <person name="Frankland J."/>
            <person name="French L."/>
            <person name="Garner P."/>
            <person name="Garnett J."/>
            <person name="Gilbert J.G.R."/>
            <person name="Gilson C.J."/>
            <person name="Ghori J."/>
            <person name="Grafham D.V."/>
            <person name="Gribble S.M."/>
            <person name="Griffiths C."/>
            <person name="Hall R.E."/>
            <person name="Hammond S."/>
            <person name="Harley J.L."/>
            <person name="Hart E.A."/>
            <person name="Heath P.D."/>
            <person name="Howden P.J."/>
            <person name="Huckle E.J."/>
            <person name="Hunt P.J."/>
            <person name="Hunt A.R."/>
            <person name="Johnson C."/>
            <person name="Johnson D."/>
            <person name="Kay M."/>
            <person name="Kimberley A.M."/>
            <person name="King A."/>
            <person name="Laird G.K."/>
            <person name="Langford C.J."/>
            <person name="Lawlor S."/>
            <person name="Leongamornlert D.A."/>
            <person name="Lloyd D.M."/>
            <person name="Lloyd C."/>
            <person name="Loveland J.E."/>
            <person name="Lovell J."/>
            <person name="Martin S."/>
            <person name="Mashreghi-Mohammadi M."/>
            <person name="McLaren S.J."/>
            <person name="McMurray A."/>
            <person name="Milne S."/>
            <person name="Moore M.J.F."/>
            <person name="Nickerson T."/>
            <person name="Palmer S.A."/>
            <person name="Pearce A.V."/>
            <person name="Peck A.I."/>
            <person name="Pelan S."/>
            <person name="Phillimore B."/>
            <person name="Porter K.M."/>
            <person name="Rice C.M."/>
            <person name="Searle S."/>
            <person name="Sehra H.K."/>
            <person name="Shownkeen R."/>
            <person name="Skuce C.D."/>
            <person name="Smith M."/>
            <person name="Steward C.A."/>
            <person name="Sycamore N."/>
            <person name="Tester J."/>
            <person name="Thomas D.W."/>
            <person name="Tracey A."/>
            <person name="Tromans A."/>
            <person name="Tubby B."/>
            <person name="Wall M."/>
            <person name="Wallis J.M."/>
            <person name="West A.P."/>
            <person name="Whitehead S.L."/>
            <person name="Willey D.L."/>
            <person name="Wilming L."/>
            <person name="Wray P.W."/>
            <person name="Wright M.W."/>
            <person name="Young L."/>
            <person name="Coulson A."/>
            <person name="Durbin R.M."/>
            <person name="Hubbard T."/>
            <person name="Sulston J.E."/>
            <person name="Beck S."/>
            <person name="Bentley D.R."/>
            <person name="Rogers J."/>
            <person name="Ross M.T."/>
        </authorList>
    </citation>
    <scope>NUCLEOTIDE SEQUENCE [LARGE SCALE GENOMIC DNA]</scope>
</reference>
<reference key="2">
    <citation type="journal article" date="2004" name="Genome Res.">
        <title>The status, quality, and expansion of the NIH full-length cDNA project: the Mammalian Gene Collection (MGC).</title>
        <authorList>
            <consortium name="The MGC Project Team"/>
        </authorList>
    </citation>
    <scope>NUCLEOTIDE SEQUENCE [LARGE SCALE MRNA]</scope>
    <source>
        <tissue>Melanoma</tissue>
    </source>
</reference>
<reference key="3">
    <citation type="journal article" date="2004" name="Nat. Genet.">
        <title>Complete sequencing and characterization of 21,243 full-length human cDNAs.</title>
        <authorList>
            <person name="Ota T."/>
            <person name="Suzuki Y."/>
            <person name="Nishikawa T."/>
            <person name="Otsuki T."/>
            <person name="Sugiyama T."/>
            <person name="Irie R."/>
            <person name="Wakamatsu A."/>
            <person name="Hayashi K."/>
            <person name="Sato H."/>
            <person name="Nagai K."/>
            <person name="Kimura K."/>
            <person name="Makita H."/>
            <person name="Sekine M."/>
            <person name="Obayashi M."/>
            <person name="Nishi T."/>
            <person name="Shibahara T."/>
            <person name="Tanaka T."/>
            <person name="Ishii S."/>
            <person name="Yamamoto J."/>
            <person name="Saito K."/>
            <person name="Kawai Y."/>
            <person name="Isono Y."/>
            <person name="Nakamura Y."/>
            <person name="Nagahari K."/>
            <person name="Murakami K."/>
            <person name="Yasuda T."/>
            <person name="Iwayanagi T."/>
            <person name="Wagatsuma M."/>
            <person name="Shiratori A."/>
            <person name="Sudo H."/>
            <person name="Hosoiri T."/>
            <person name="Kaku Y."/>
            <person name="Kodaira H."/>
            <person name="Kondo H."/>
            <person name="Sugawara M."/>
            <person name="Takahashi M."/>
            <person name="Kanda K."/>
            <person name="Yokoi T."/>
            <person name="Furuya T."/>
            <person name="Kikkawa E."/>
            <person name="Omura Y."/>
            <person name="Abe K."/>
            <person name="Kamihara K."/>
            <person name="Katsuta N."/>
            <person name="Sato K."/>
            <person name="Tanikawa M."/>
            <person name="Yamazaki M."/>
            <person name="Ninomiya K."/>
            <person name="Ishibashi T."/>
            <person name="Yamashita H."/>
            <person name="Murakawa K."/>
            <person name="Fujimori K."/>
            <person name="Tanai H."/>
            <person name="Kimata M."/>
            <person name="Watanabe M."/>
            <person name="Hiraoka S."/>
            <person name="Chiba Y."/>
            <person name="Ishida S."/>
            <person name="Ono Y."/>
            <person name="Takiguchi S."/>
            <person name="Watanabe S."/>
            <person name="Yosida M."/>
            <person name="Hotuta T."/>
            <person name="Kusano J."/>
            <person name="Kanehori K."/>
            <person name="Takahashi-Fujii A."/>
            <person name="Hara H."/>
            <person name="Tanase T.-O."/>
            <person name="Nomura Y."/>
            <person name="Togiya S."/>
            <person name="Komai F."/>
            <person name="Hara R."/>
            <person name="Takeuchi K."/>
            <person name="Arita M."/>
            <person name="Imose N."/>
            <person name="Musashino K."/>
            <person name="Yuuki H."/>
            <person name="Oshima A."/>
            <person name="Sasaki N."/>
            <person name="Aotsuka S."/>
            <person name="Yoshikawa Y."/>
            <person name="Matsunawa H."/>
            <person name="Ichihara T."/>
            <person name="Shiohata N."/>
            <person name="Sano S."/>
            <person name="Moriya S."/>
            <person name="Momiyama H."/>
            <person name="Satoh N."/>
            <person name="Takami S."/>
            <person name="Terashima Y."/>
            <person name="Suzuki O."/>
            <person name="Nakagawa S."/>
            <person name="Senoh A."/>
            <person name="Mizoguchi H."/>
            <person name="Goto Y."/>
            <person name="Shimizu F."/>
            <person name="Wakebe H."/>
            <person name="Hishigaki H."/>
            <person name="Watanabe T."/>
            <person name="Sugiyama A."/>
            <person name="Takemoto M."/>
            <person name="Kawakami B."/>
            <person name="Yamazaki M."/>
            <person name="Watanabe K."/>
            <person name="Kumagai A."/>
            <person name="Itakura S."/>
            <person name="Fukuzumi Y."/>
            <person name="Fujimori Y."/>
            <person name="Komiyama M."/>
            <person name="Tashiro H."/>
            <person name="Tanigami A."/>
            <person name="Fujiwara T."/>
            <person name="Ono T."/>
            <person name="Yamada K."/>
            <person name="Fujii Y."/>
            <person name="Ozaki K."/>
            <person name="Hirao M."/>
            <person name="Ohmori Y."/>
            <person name="Kawabata A."/>
            <person name="Hikiji T."/>
            <person name="Kobatake N."/>
            <person name="Inagaki H."/>
            <person name="Ikema Y."/>
            <person name="Okamoto S."/>
            <person name="Okitani R."/>
            <person name="Kawakami T."/>
            <person name="Noguchi S."/>
            <person name="Itoh T."/>
            <person name="Shigeta K."/>
            <person name="Senba T."/>
            <person name="Matsumura K."/>
            <person name="Nakajima Y."/>
            <person name="Mizuno T."/>
            <person name="Morinaga M."/>
            <person name="Sasaki M."/>
            <person name="Togashi T."/>
            <person name="Oyama M."/>
            <person name="Hata H."/>
            <person name="Watanabe M."/>
            <person name="Komatsu T."/>
            <person name="Mizushima-Sugano J."/>
            <person name="Satoh T."/>
            <person name="Shirai Y."/>
            <person name="Takahashi Y."/>
            <person name="Nakagawa K."/>
            <person name="Okumura K."/>
            <person name="Nagase T."/>
            <person name="Nomura N."/>
            <person name="Kikuchi H."/>
            <person name="Masuho Y."/>
            <person name="Yamashita R."/>
            <person name="Nakai K."/>
            <person name="Yada T."/>
            <person name="Nakamura Y."/>
            <person name="Ohara O."/>
            <person name="Isogai T."/>
            <person name="Sugano S."/>
        </authorList>
    </citation>
    <scope>NUCLEOTIDE SEQUENCE [LARGE SCALE MRNA] OF 522-690</scope>
    <source>
        <tissue>Colon</tissue>
    </source>
</reference>
<reference key="4">
    <citation type="journal article" date="2008" name="Proc. Natl. Acad. Sci. U.S.A.">
        <title>A quantitative atlas of mitotic phosphorylation.</title>
        <authorList>
            <person name="Dephoure N."/>
            <person name="Zhou C."/>
            <person name="Villen J."/>
            <person name="Beausoleil S.A."/>
            <person name="Bakalarski C.E."/>
            <person name="Elledge S.J."/>
            <person name="Gygi S.P."/>
        </authorList>
    </citation>
    <scope>IDENTIFICATION BY MASS SPECTROMETRY [LARGE SCALE ANALYSIS]</scope>
    <source>
        <tissue>Cervix carcinoma</tissue>
    </source>
</reference>
<reference key="5">
    <citation type="submission" date="2009-02" db="PDB data bank">
        <title>Crystal structure of the second Pdz domain of the human Numb-binding protein 2.</title>
        <authorList>
            <consortium name="Structural genomics consortium (SGC)"/>
        </authorList>
    </citation>
    <scope>X-RAY CRYSTALLOGRAPHY (1.30 ANGSTROMS) OF 336-424</scope>
</reference>
<comment type="subunit">
    <text evidence="1">Interacts with the phosphotyrosine interaction domain of NUMB.</text>
</comment>
<comment type="interaction">
    <interactant intactId="EBI-2340947">
        <id>Q8N448</id>
    </interactant>
    <interactant intactId="EBI-356231">
        <id>P06576</id>
        <label>ATP5F1B</label>
    </interactant>
    <organismsDiffer>false</organismsDiffer>
    <experiments>4</experiments>
</comment>
<comment type="interaction">
    <interactant intactId="EBI-2340947">
        <id>Q8N448</id>
    </interactant>
    <interactant intactId="EBI-930964">
        <id>P54253</id>
        <label>ATXN1</label>
    </interactant>
    <organismsDiffer>false</organismsDiffer>
    <experiments>6</experiments>
</comment>
<comment type="interaction">
    <interactant intactId="EBI-2340947">
        <id>Q8N448</id>
    </interactant>
    <interactant intactId="EBI-78219">
        <id>P45973</id>
        <label>CBX5</label>
    </interactant>
    <organismsDiffer>false</organismsDiffer>
    <experiments>3</experiments>
</comment>
<comment type="interaction">
    <interactant intactId="EBI-2340947">
        <id>Q8N448</id>
    </interactant>
    <interactant intactId="EBI-741101">
        <id>Q13643</id>
        <label>FHL3</label>
    </interactant>
    <organismsDiffer>false</organismsDiffer>
    <experiments>4</experiments>
</comment>
<comment type="interaction">
    <interactant intactId="EBI-2340947">
        <id>Q8N448</id>
    </interactant>
    <interactant intactId="EBI-352682">
        <id>P04792</id>
        <label>HSPB1</label>
    </interactant>
    <organismsDiffer>false</organismsDiffer>
    <experiments>3</experiments>
</comment>
<comment type="interaction">
    <interactant intactId="EBI-2340947">
        <id>Q8N448</id>
    </interactant>
    <interactant intactId="EBI-466029">
        <id>P42858</id>
        <label>HTT</label>
    </interactant>
    <organismsDiffer>false</organismsDiffer>
    <experiments>3</experiments>
</comment>
<comment type="interaction">
    <interactant intactId="EBI-2340947">
        <id>Q8N448</id>
    </interactant>
    <interactant intactId="EBI-747509">
        <id>Q9UHH9</id>
        <label>IP6K2</label>
    </interactant>
    <organismsDiffer>false</organismsDiffer>
    <experiments>3</experiments>
</comment>
<comment type="interaction">
    <interactant intactId="EBI-2340947">
        <id>Q8N448</id>
    </interactant>
    <interactant intactId="EBI-10975473">
        <id>O60333-2</id>
        <label>KIF1B</label>
    </interactant>
    <organismsDiffer>false</organismsDiffer>
    <experiments>3</experiments>
</comment>
<comment type="interaction">
    <interactant intactId="EBI-2340947">
        <id>Q8N448</id>
    </interactant>
    <interactant intactId="EBI-307294">
        <id>Q13163</id>
        <label>MAP2K5</label>
    </interactant>
    <organismsDiffer>false</organismsDiffer>
    <experiments>3</experiments>
</comment>
<comment type="interaction">
    <interactant intactId="EBI-2340947">
        <id>Q8N448</id>
    </interactant>
    <interactant intactId="EBI-713568">
        <id>P45984</id>
        <label>MAPK9</label>
    </interactant>
    <organismsDiffer>false</organismsDiffer>
    <experiments>3</experiments>
</comment>
<comment type="interaction">
    <interactant intactId="EBI-2340947">
        <id>Q8N448</id>
    </interactant>
    <interactant intactId="EBI-748896">
        <id>Q96HT8</id>
        <label>MRFAP1L1</label>
    </interactant>
    <organismsDiffer>false</organismsDiffer>
    <experiments>4</experiments>
</comment>
<comment type="interaction">
    <interactant intactId="EBI-2340947">
        <id>Q8N448</id>
    </interactant>
    <interactant intactId="EBI-6952711">
        <id>Q8WY64</id>
        <label>MYLIP</label>
    </interactant>
    <organismsDiffer>false</organismsDiffer>
    <experiments>4</experiments>
</comment>
<comment type="interaction">
    <interactant intactId="EBI-2340947">
        <id>Q8N448</id>
    </interactant>
    <interactant intactId="EBI-748974">
        <id>Q96CV9</id>
        <label>OPTN</label>
    </interactant>
    <organismsDiffer>false</organismsDiffer>
    <experiments>3</experiments>
</comment>
<comment type="interaction">
    <interactant intactId="EBI-2340947">
        <id>Q8N448</id>
    </interactant>
    <interactant intactId="EBI-714785">
        <id>Q9H8K7</id>
        <label>PAAT</label>
    </interactant>
    <organismsDiffer>false</organismsDiffer>
    <experiments>3</experiments>
</comment>
<comment type="interaction">
    <interactant intactId="EBI-2340947">
        <id>Q8N448</id>
    </interactant>
    <interactant intactId="EBI-2858265">
        <id>Q86TG7</id>
        <label>PEG10</label>
    </interactant>
    <organismsDiffer>false</organismsDiffer>
    <experiments>3</experiments>
</comment>
<comment type="interaction">
    <interactant intactId="EBI-2340947">
        <id>Q8N448</id>
    </interactant>
    <interactant intactId="EBI-751947">
        <id>Q8IUZ5</id>
        <label>PHYKPL</label>
    </interactant>
    <organismsDiffer>false</organismsDiffer>
    <experiments>3</experiments>
</comment>
<comment type="interaction">
    <interactant intactId="EBI-2340947">
        <id>Q8N448</id>
    </interactant>
    <interactant intactId="EBI-721110">
        <id>Q96EY7</id>
        <label>PTCD3</label>
    </interactant>
    <organismsDiffer>false</organismsDiffer>
    <experiments>3</experiments>
</comment>
<comment type="interaction">
    <interactant intactId="EBI-2340947">
        <id>Q8N448</id>
    </interactant>
    <interactant intactId="EBI-2823066">
        <id>Q96I15</id>
        <label>SCLY</label>
    </interactant>
    <organismsDiffer>false</organismsDiffer>
    <experiments>3</experiments>
</comment>
<comment type="interaction">
    <interactant intactId="EBI-2340947">
        <id>Q8N448</id>
    </interactant>
    <interactant intactId="EBI-985879">
        <id>P37840</id>
        <label>SNCA</label>
    </interactant>
    <organismsDiffer>false</organismsDiffer>
    <experiments>3</experiments>
</comment>
<comment type="interaction">
    <interactant intactId="EBI-2340947">
        <id>Q8N448</id>
    </interactant>
    <interactant intactId="EBI-990792">
        <id>P00441</id>
        <label>SOD1</label>
    </interactant>
    <organismsDiffer>false</organismsDiffer>
    <experiments>3</experiments>
</comment>
<comment type="interaction">
    <interactant intactId="EBI-2340947">
        <id>Q8N448</id>
    </interactant>
    <interactant intactId="EBI-5235340">
        <id>Q7Z699</id>
        <label>SPRED1</label>
    </interactant>
    <organismsDiffer>false</organismsDiffer>
    <experiments>3</experiments>
</comment>
<comment type="interaction">
    <interactant intactId="EBI-2340947">
        <id>Q8N448</id>
    </interactant>
    <interactant intactId="EBI-372899">
        <id>Q13148</id>
        <label>TARDBP</label>
    </interactant>
    <organismsDiffer>false</organismsDiffer>
    <experiments>6</experiments>
</comment>
<comment type="interaction">
    <interactant intactId="EBI-2340947">
        <id>Q8N448</id>
    </interactant>
    <interactant intactId="EBI-296151">
        <id>P37173</id>
        <label>TGFBR2</label>
    </interactant>
    <organismsDiffer>false</organismsDiffer>
    <experiments>3</experiments>
</comment>
<comment type="interaction">
    <interactant intactId="EBI-2340947">
        <id>Q8N448</id>
    </interactant>
    <interactant intactId="EBI-720609">
        <id>O76024</id>
        <label>WFS1</label>
    </interactant>
    <organismsDiffer>false</organismsDiffer>
    <experiments>3</experiments>
</comment>
<comment type="interaction">
    <interactant intactId="EBI-2340947">
        <id>Q8N448</id>
    </interactant>
    <interactant intactId="EBI-26374535">
        <id>K9N5R3</id>
        <label>E</label>
    </interactant>
    <organismsDiffer>true</organismsDiffer>
    <experiments>2</experiments>
</comment>
<comment type="interaction">
    <interactant intactId="EBI-2340947">
        <id>Q8N448</id>
    </interactant>
    <interactant intactId="EBI-3957603">
        <id>P09022</id>
        <label>Hoxa1</label>
    </interactant>
    <organismsDiffer>true</organismsDiffer>
    <experiments>3</experiments>
</comment>
<comment type="interaction">
    <interactant intactId="EBI-2340947">
        <id>Q8N448</id>
    </interactant>
    <interactant intactId="EBI-9676218">
        <id>P03410</id>
        <label>tax</label>
    </interactant>
    <organismsDiffer>true</organismsDiffer>
    <experiments>4</experiments>
</comment>
<comment type="interaction">
    <interactant intactId="EBI-2340947">
        <id>Q8N448</id>
    </interactant>
    <interactant intactId="EBI-9675698">
        <id>P14079</id>
        <label>tax</label>
    </interactant>
    <organismsDiffer>true</organismsDiffer>
    <experiments>4</experiments>
</comment>
<comment type="interaction">
    <interactant intactId="EBI-2340947">
        <id>Q8N448</id>
    </interactant>
    <interactant intactId="EBI-9675596">
        <id>P0C206</id>
    </interactant>
    <organismsDiffer>true</organismsDiffer>
    <experiments>4</experiments>
</comment>
<comment type="interaction">
    <interactant intactId="EBI-2340947">
        <id>Q8N448</id>
    </interactant>
    <interactant intactId="EBI-9676175">
        <id>Q85601</id>
    </interactant>
    <organismsDiffer>true</organismsDiffer>
    <experiments>4</experiments>
</comment>
<comment type="domain">
    <text>The NPXY motif is required for the interaction with the PID domain of NUMB. It is however not sufficient.</text>
</comment>
<comment type="sequence caution" evidence="5">
    <conflict type="erroneous initiation">
        <sequence resource="EMBL-CDS" id="BAD18754"/>
    </conflict>
    <text>Truncated N-terminus.</text>
</comment>
<keyword id="KW-0002">3D-structure</keyword>
<keyword id="KW-0479">Metal-binding</keyword>
<keyword id="KW-1267">Proteomics identification</keyword>
<keyword id="KW-1185">Reference proteome</keyword>
<keyword id="KW-0677">Repeat</keyword>
<keyword id="KW-0862">Zinc</keyword>
<keyword id="KW-0863">Zinc-finger</keyword>
<gene>
    <name type="primary">LNX2</name>
    <name type="synonym">PDZRN1</name>
</gene>
<dbReference type="EMBL" id="AL138699">
    <property type="status" value="NOT_ANNOTATED_CDS"/>
    <property type="molecule type" value="Genomic_DNA"/>
</dbReference>
<dbReference type="EMBL" id="BC036755">
    <property type="protein sequence ID" value="AAH36755.1"/>
    <property type="molecule type" value="mRNA"/>
</dbReference>
<dbReference type="EMBL" id="AK172771">
    <property type="protein sequence ID" value="BAD18754.1"/>
    <property type="status" value="ALT_INIT"/>
    <property type="molecule type" value="mRNA"/>
</dbReference>
<dbReference type="CCDS" id="CCDS9323.1"/>
<dbReference type="RefSeq" id="NP_699202.1">
    <property type="nucleotide sequence ID" value="NM_153371.4"/>
</dbReference>
<dbReference type="RefSeq" id="XP_016875923.1">
    <property type="nucleotide sequence ID" value="XM_017020434.2"/>
</dbReference>
<dbReference type="RefSeq" id="XP_047286101.1">
    <property type="nucleotide sequence ID" value="XM_047430145.1"/>
</dbReference>
<dbReference type="RefSeq" id="XP_047286103.1">
    <property type="nucleotide sequence ID" value="XM_047430147.1"/>
</dbReference>
<dbReference type="RefSeq" id="XP_047286104.1">
    <property type="nucleotide sequence ID" value="XM_047430148.1"/>
</dbReference>
<dbReference type="RefSeq" id="XP_047286105.1">
    <property type="nucleotide sequence ID" value="XM_047430149.1"/>
</dbReference>
<dbReference type="RefSeq" id="XP_047286106.1">
    <property type="nucleotide sequence ID" value="XM_047430150.1"/>
</dbReference>
<dbReference type="PDB" id="2VWR">
    <property type="method" value="X-ray"/>
    <property type="resolution" value="1.30 A"/>
    <property type="chains" value="A=336-424"/>
</dbReference>
<dbReference type="PDB" id="5DIN">
    <property type="method" value="X-ray"/>
    <property type="resolution" value="1.86 A"/>
    <property type="chains" value="A/B=20-147"/>
</dbReference>
<dbReference type="PDB" id="5E11">
    <property type="method" value="X-ray"/>
    <property type="resolution" value="1.80 A"/>
    <property type="chains" value="A=336-424"/>
</dbReference>
<dbReference type="PDB" id="5E1Y">
    <property type="method" value="X-ray"/>
    <property type="resolution" value="1.01 A"/>
    <property type="chains" value="A=336-424"/>
</dbReference>
<dbReference type="PDB" id="5E21">
    <property type="method" value="X-ray"/>
    <property type="resolution" value="1.01 A"/>
    <property type="chains" value="A=336-424"/>
</dbReference>
<dbReference type="PDB" id="5E22">
    <property type="method" value="X-ray"/>
    <property type="resolution" value="1.80 A"/>
    <property type="chains" value="A/B=336-424"/>
</dbReference>
<dbReference type="PDB" id="7QCT">
    <property type="method" value="X-ray"/>
    <property type="resolution" value="3.20 A"/>
    <property type="chains" value="A/B=334-426"/>
</dbReference>
<dbReference type="PDBsum" id="2VWR"/>
<dbReference type="PDBsum" id="5DIN"/>
<dbReference type="PDBsum" id="5E11"/>
<dbReference type="PDBsum" id="5E1Y"/>
<dbReference type="PDBsum" id="5E21"/>
<dbReference type="PDBsum" id="5E22"/>
<dbReference type="PDBsum" id="7QCT"/>
<dbReference type="SMR" id="Q8N448"/>
<dbReference type="BioGRID" id="128798">
    <property type="interactions" value="111"/>
</dbReference>
<dbReference type="FunCoup" id="Q8N448">
    <property type="interactions" value="310"/>
</dbReference>
<dbReference type="IntAct" id="Q8N448">
    <property type="interactions" value="111"/>
</dbReference>
<dbReference type="MINT" id="Q8N448"/>
<dbReference type="STRING" id="9606.ENSP00000325929"/>
<dbReference type="MoonDB" id="Q8N448">
    <property type="type" value="Predicted"/>
</dbReference>
<dbReference type="GlyGen" id="Q8N448">
    <property type="glycosylation" value="1 site, 1 N-linked glycan (1 site)"/>
</dbReference>
<dbReference type="iPTMnet" id="Q8N448"/>
<dbReference type="PhosphoSitePlus" id="Q8N448"/>
<dbReference type="BioMuta" id="LNX2"/>
<dbReference type="DMDM" id="29840784"/>
<dbReference type="jPOST" id="Q8N448"/>
<dbReference type="MassIVE" id="Q8N448"/>
<dbReference type="PaxDb" id="9606-ENSP00000325929"/>
<dbReference type="PeptideAtlas" id="Q8N448"/>
<dbReference type="ProteomicsDB" id="71884"/>
<dbReference type="Pumba" id="Q8N448"/>
<dbReference type="Antibodypedia" id="22674">
    <property type="antibodies" value="171 antibodies from 24 providers"/>
</dbReference>
<dbReference type="DNASU" id="222484"/>
<dbReference type="Ensembl" id="ENST00000316334.5">
    <property type="protein sequence ID" value="ENSP00000325929.3"/>
    <property type="gene ID" value="ENSG00000139517.9"/>
</dbReference>
<dbReference type="Ensembl" id="ENST00000649248.1">
    <property type="protein sequence ID" value="ENSP00000497224.1"/>
    <property type="gene ID" value="ENSG00000139517.9"/>
</dbReference>
<dbReference type="GeneID" id="222484"/>
<dbReference type="KEGG" id="hsa:222484"/>
<dbReference type="MANE-Select" id="ENST00000316334.5">
    <property type="protein sequence ID" value="ENSP00000325929.3"/>
    <property type="RefSeq nucleotide sequence ID" value="NM_153371.4"/>
    <property type="RefSeq protein sequence ID" value="NP_699202.1"/>
</dbReference>
<dbReference type="UCSC" id="uc001url.5">
    <property type="organism name" value="human"/>
</dbReference>
<dbReference type="AGR" id="HGNC:20421"/>
<dbReference type="CTD" id="222484"/>
<dbReference type="DisGeNET" id="222484"/>
<dbReference type="GeneCards" id="LNX2"/>
<dbReference type="HGNC" id="HGNC:20421">
    <property type="gene designation" value="LNX2"/>
</dbReference>
<dbReference type="HPA" id="ENSG00000139517">
    <property type="expression patterns" value="Low tissue specificity"/>
</dbReference>
<dbReference type="MIM" id="609733">
    <property type="type" value="gene"/>
</dbReference>
<dbReference type="neXtProt" id="NX_Q8N448"/>
<dbReference type="OpenTargets" id="ENSG00000139517"/>
<dbReference type="PharmGKB" id="PA134899015"/>
<dbReference type="VEuPathDB" id="HostDB:ENSG00000139517"/>
<dbReference type="eggNOG" id="KOG3528">
    <property type="taxonomic scope" value="Eukaryota"/>
</dbReference>
<dbReference type="GeneTree" id="ENSGT00940000158381"/>
<dbReference type="HOGENOM" id="CLU_021213_0_0_1"/>
<dbReference type="InParanoid" id="Q8N448"/>
<dbReference type="OMA" id="LPMWTDE"/>
<dbReference type="OrthoDB" id="438726at2759"/>
<dbReference type="PAN-GO" id="Q8N448">
    <property type="GO annotations" value="1 GO annotation based on evolutionary models"/>
</dbReference>
<dbReference type="PhylomeDB" id="Q8N448"/>
<dbReference type="TreeFam" id="TF330709"/>
<dbReference type="PathwayCommons" id="Q8N448"/>
<dbReference type="SignaLink" id="Q8N448"/>
<dbReference type="SIGNOR" id="Q8N448"/>
<dbReference type="BioGRID-ORCS" id="222484">
    <property type="hits" value="17 hits in 1195 CRISPR screens"/>
</dbReference>
<dbReference type="ChiTaRS" id="LNX2">
    <property type="organism name" value="human"/>
</dbReference>
<dbReference type="EvolutionaryTrace" id="Q8N448"/>
<dbReference type="GenomeRNAi" id="222484"/>
<dbReference type="Pharos" id="Q8N448">
    <property type="development level" value="Tbio"/>
</dbReference>
<dbReference type="PRO" id="PR:Q8N448"/>
<dbReference type="Proteomes" id="UP000005640">
    <property type="component" value="Chromosome 13"/>
</dbReference>
<dbReference type="RNAct" id="Q8N448">
    <property type="molecule type" value="protein"/>
</dbReference>
<dbReference type="Bgee" id="ENSG00000139517">
    <property type="expression patterns" value="Expressed in jejunal mucosa and 191 other cell types or tissues"/>
</dbReference>
<dbReference type="GO" id="GO:0005886">
    <property type="term" value="C:plasma membrane"/>
    <property type="evidence" value="ECO:0007669"/>
    <property type="project" value="Ensembl"/>
</dbReference>
<dbReference type="GO" id="GO:0042802">
    <property type="term" value="F:identical protein binding"/>
    <property type="evidence" value="ECO:0007669"/>
    <property type="project" value="Ensembl"/>
</dbReference>
<dbReference type="GO" id="GO:0030165">
    <property type="term" value="F:PDZ domain binding"/>
    <property type="evidence" value="ECO:0007669"/>
    <property type="project" value="Ensembl"/>
</dbReference>
<dbReference type="GO" id="GO:0004842">
    <property type="term" value="F:ubiquitin-protein transferase activity"/>
    <property type="evidence" value="ECO:0000318"/>
    <property type="project" value="GO_Central"/>
</dbReference>
<dbReference type="GO" id="GO:0008270">
    <property type="term" value="F:zinc ion binding"/>
    <property type="evidence" value="ECO:0007669"/>
    <property type="project" value="UniProtKB-KW"/>
</dbReference>
<dbReference type="GO" id="GO:0061351">
    <property type="term" value="P:neural precursor cell proliferation"/>
    <property type="evidence" value="ECO:0007669"/>
    <property type="project" value="Ensembl"/>
</dbReference>
<dbReference type="GO" id="GO:0030182">
    <property type="term" value="P:neuron differentiation"/>
    <property type="evidence" value="ECO:0007669"/>
    <property type="project" value="Ensembl"/>
</dbReference>
<dbReference type="CDD" id="cd16780">
    <property type="entry name" value="mRING-HC-C3HC3D_LNX2"/>
    <property type="match status" value="1"/>
</dbReference>
<dbReference type="CDD" id="cd06677">
    <property type="entry name" value="PDZ1_LNX1_2-like"/>
    <property type="match status" value="1"/>
</dbReference>
<dbReference type="CDD" id="cd06678">
    <property type="entry name" value="PDZ2_LNX1_2-like"/>
    <property type="match status" value="1"/>
</dbReference>
<dbReference type="CDD" id="cd06679">
    <property type="entry name" value="PDZ3_LNX1_2-like"/>
    <property type="match status" value="1"/>
</dbReference>
<dbReference type="CDD" id="cd06680">
    <property type="entry name" value="PDZ4_LNX1_2-like"/>
    <property type="match status" value="1"/>
</dbReference>
<dbReference type="FunFam" id="2.30.42.10:FF:000081">
    <property type="entry name" value="Ligand of Numb protein X 2"/>
    <property type="match status" value="1"/>
</dbReference>
<dbReference type="FunFam" id="2.30.42.10:FF:000194">
    <property type="entry name" value="ligand of Numb protein X 2"/>
    <property type="match status" value="1"/>
</dbReference>
<dbReference type="FunFam" id="3.30.40.10:FF:000120">
    <property type="entry name" value="ligand of Numb protein X 2"/>
    <property type="match status" value="1"/>
</dbReference>
<dbReference type="FunFam" id="2.30.42.10:FF:000120">
    <property type="entry name" value="Ligand of numb-protein X 2"/>
    <property type="match status" value="1"/>
</dbReference>
<dbReference type="FunFam" id="2.30.42.10:FF:000164">
    <property type="entry name" value="Ligand of numb-protein X 2"/>
    <property type="match status" value="1"/>
</dbReference>
<dbReference type="Gene3D" id="2.30.42.10">
    <property type="match status" value="4"/>
</dbReference>
<dbReference type="Gene3D" id="3.30.40.10">
    <property type="entry name" value="Zinc/RING finger domain, C3HC4 (zinc finger)"/>
    <property type="match status" value="1"/>
</dbReference>
<dbReference type="InterPro" id="IPR001478">
    <property type="entry name" value="PDZ"/>
</dbReference>
<dbReference type="InterPro" id="IPR051342">
    <property type="entry name" value="PDZ_scaffold"/>
</dbReference>
<dbReference type="InterPro" id="IPR036034">
    <property type="entry name" value="PDZ_sf"/>
</dbReference>
<dbReference type="InterPro" id="IPR001841">
    <property type="entry name" value="Znf_RING"/>
</dbReference>
<dbReference type="InterPro" id="IPR013083">
    <property type="entry name" value="Znf_RING/FYVE/PHD"/>
</dbReference>
<dbReference type="InterPro" id="IPR017907">
    <property type="entry name" value="Znf_RING_CS"/>
</dbReference>
<dbReference type="PANTHER" id="PTHR19964:SF33">
    <property type="entry name" value="LIGAND OF NUMB PROTEIN X 2"/>
    <property type="match status" value="1"/>
</dbReference>
<dbReference type="PANTHER" id="PTHR19964">
    <property type="entry name" value="MULTIPLE PDZ DOMAIN PROTEIN"/>
    <property type="match status" value="1"/>
</dbReference>
<dbReference type="Pfam" id="PF00595">
    <property type="entry name" value="PDZ"/>
    <property type="match status" value="4"/>
</dbReference>
<dbReference type="Pfam" id="PF13923">
    <property type="entry name" value="zf-C3HC4_2"/>
    <property type="match status" value="1"/>
</dbReference>
<dbReference type="SMART" id="SM00228">
    <property type="entry name" value="PDZ"/>
    <property type="match status" value="4"/>
</dbReference>
<dbReference type="SMART" id="SM00184">
    <property type="entry name" value="RING"/>
    <property type="match status" value="1"/>
</dbReference>
<dbReference type="SUPFAM" id="SSF50156">
    <property type="entry name" value="PDZ domain-like"/>
    <property type="match status" value="4"/>
</dbReference>
<dbReference type="SUPFAM" id="SSF57850">
    <property type="entry name" value="RING/U-box"/>
    <property type="match status" value="1"/>
</dbReference>
<dbReference type="PROSITE" id="PS50106">
    <property type="entry name" value="PDZ"/>
    <property type="match status" value="4"/>
</dbReference>
<dbReference type="PROSITE" id="PS00518">
    <property type="entry name" value="ZF_RING_1"/>
    <property type="match status" value="1"/>
</dbReference>
<dbReference type="PROSITE" id="PS50089">
    <property type="entry name" value="ZF_RING_2"/>
    <property type="match status" value="1"/>
</dbReference>
<organism>
    <name type="scientific">Homo sapiens</name>
    <name type="common">Human</name>
    <dbReference type="NCBI Taxonomy" id="9606"/>
    <lineage>
        <taxon>Eukaryota</taxon>
        <taxon>Metazoa</taxon>
        <taxon>Chordata</taxon>
        <taxon>Craniata</taxon>
        <taxon>Vertebrata</taxon>
        <taxon>Euteleostomi</taxon>
        <taxon>Mammalia</taxon>
        <taxon>Eutheria</taxon>
        <taxon>Euarchontoglires</taxon>
        <taxon>Primates</taxon>
        <taxon>Haplorrhini</taxon>
        <taxon>Catarrhini</taxon>
        <taxon>Hominidae</taxon>
        <taxon>Homo</taxon>
    </lineage>
</organism>
<protein>
    <recommendedName>
        <fullName>Ligand of Numb protein X 2</fullName>
    </recommendedName>
    <alternativeName>
        <fullName>Numb-binding protein 2</fullName>
    </alternativeName>
    <alternativeName>
        <fullName>PDZ domain-containing RING finger protein 1</fullName>
    </alternativeName>
</protein>
<accession>Q8N448</accession>
<accession>Q5W0P0</accession>
<accession>Q6ZMH2</accession>
<accession>Q96SH4</accession>
<proteinExistence type="evidence at protein level"/>
<evidence type="ECO:0000250" key="1"/>
<evidence type="ECO:0000255" key="2">
    <source>
        <dbReference type="PROSITE-ProRule" id="PRU00143"/>
    </source>
</evidence>
<evidence type="ECO:0000255" key="3">
    <source>
        <dbReference type="PROSITE-ProRule" id="PRU00175"/>
    </source>
</evidence>
<evidence type="ECO:0000256" key="4">
    <source>
        <dbReference type="SAM" id="MobiDB-lite"/>
    </source>
</evidence>
<evidence type="ECO:0000305" key="5"/>
<evidence type="ECO:0007829" key="6">
    <source>
        <dbReference type="PDB" id="5DIN"/>
    </source>
</evidence>
<evidence type="ECO:0007829" key="7">
    <source>
        <dbReference type="PDB" id="5E1Y"/>
    </source>
</evidence>